<protein>
    <recommendedName>
        <fullName evidence="5 6 8 9 10">Adenylylsulfate reductase subunit beta</fullName>
        <shortName evidence="6">AdoPSO(4) reductase subunit B</shortName>
    </recommendedName>
    <alternativeName>
        <fullName evidence="5">Adenosine 5'-phosphosulfate reductase subunit beta</fullName>
        <shortName evidence="5">APSR subunit B</shortName>
    </alternativeName>
</protein>
<accession>T2G899</accession>
<accession>D2YW41</accession>
<accession>S5VNU5</accession>
<gene>
    <name evidence="5 8 9" type="primary">aprB</name>
    <name evidence="9" type="ORF">DGI_0458</name>
</gene>
<reference evidence="8" key="1">
    <citation type="journal article" date="2013" name="J. Bacteriol.">
        <title>Roles of HynAB and Ech, the only two hydrogenases found in the model sulfate reducer Desulfovibrio gigas.</title>
        <authorList>
            <person name="Morais-Silva F.O."/>
            <person name="Santos C.I."/>
            <person name="Rodrigues R."/>
            <person name="Pereira I.A."/>
            <person name="Rodrigues-Pousada C."/>
        </authorList>
    </citation>
    <scope>NUCLEOTIDE SEQUENCE [LARGE SCALE GENOMIC DNA]</scope>
    <source>
        <strain evidence="8">ATCC 19364 / DSM 1382 / NCIMB 9332 / VKM B-1759</strain>
    </source>
</reference>
<reference evidence="9" key="2">
    <citation type="submission" date="2013-07" db="EMBL/GenBank/DDBJ databases">
        <authorList>
            <person name="Morais-Silva F.O."/>
            <person name="Rezende A.M."/>
            <person name="Pimentel C."/>
            <person name="Resende D.M."/>
            <person name="Santos C.I."/>
            <person name="Clemente C."/>
            <person name="de Oliveira L.M."/>
            <person name="da Silva S.M."/>
            <person name="Costa D.A."/>
            <person name="Varela-Raposo A."/>
            <person name="Horacio E.C.A."/>
            <person name="Matos M."/>
            <person name="Flores O."/>
            <person name="Ruiz J.C."/>
            <person name="Rodrigues-Pousada C."/>
        </authorList>
    </citation>
    <scope>NUCLEOTIDE SEQUENCE [LARGE SCALE GENOMIC DNA]</scope>
    <source>
        <strain evidence="9">ATCC 19364 / DSM 1382 / NCIMB 9332 / VKM B-1759</strain>
    </source>
</reference>
<reference evidence="10 11" key="3">
    <citation type="journal article" date="2009" name="J. Bacteriol.">
        <title>Crystal structure of Adenylylsulfate reductase from Desulfovibrio gigas suggests a potential self-regulation mechanism involving the C terminus of the beta-subunit.</title>
        <authorList>
            <person name="Chiang Y.L."/>
            <person name="Hsieh Y.C."/>
            <person name="Fang J.Y."/>
            <person name="Liu E.H."/>
            <person name="Huang Y.C."/>
            <person name="Chuankhayan P."/>
            <person name="Jeyakanthan J."/>
            <person name="Liu M.Y."/>
            <person name="Chan S.I."/>
            <person name="Chen C.J."/>
        </authorList>
    </citation>
    <scope>NUCLEOTIDE SEQUENCE [GENOMIC DNA] OF 2-167</scope>
    <scope>X-RAY CRYSTALLOGRAPHY (3.20 ANGSTROMS) IN COMPLEX WITH IRON-SULFUR (4FE-4S) AND APRA</scope>
    <scope>FUNCTION</scope>
    <scope>CATALYTIC ACTIVITY OF THE ADENYLYLSULFATE REDUCTASE</scope>
    <scope>COFACTOR</scope>
    <scope>SUBUNIT</scope>
    <scope>DOMAINS</scope>
    <scope>SITES</scope>
    <source>
        <strain evidence="5">ATCC 19364 / DSM 1382 / NCIMB 9332 / VKM B-1759</strain>
    </source>
</reference>
<reference key="4">
    <citation type="journal article" date="1981" name="J. Bacteriol.">
        <title>Localization of dehydrogenases, reductases, and electron transfer components in the sulfate-reducing bacterium Desulfovibrio gigas.</title>
        <authorList>
            <person name="Odom J.M."/>
            <person name="Peck H.D. Jr."/>
        </authorList>
    </citation>
    <scope>CATALYTIC ACTIVITY OF THE ADENYLYLSULFATE REDUCTASE</scope>
    <scope>SUBCELLULAR LOCATION</scope>
</reference>
<reference key="5">
    <citation type="journal article" date="1990" name="Eur. J. Biochem.">
        <title>The active centers of adenylylsulfate reductase from Desulfovibrio gigas. Characterization and spectroscopic studies.</title>
        <authorList>
            <person name="Lampreia J."/>
            <person name="Moura I."/>
            <person name="Teixeira M."/>
            <person name="Peck H.D. Jr."/>
            <person name="Legall J."/>
            <person name="Huynh B.H."/>
            <person name="Moura J.J."/>
        </authorList>
    </citation>
    <scope>FUNCTION</scope>
    <scope>CATALYTIC ACTIVITY OF THE ADENYLYLSULFATE REDUCTASE</scope>
    <scope>COFACTOR</scope>
    <scope>BIOPHYSICOCHEMICAL PROPERTIES</scope>
    <scope>SUBUNIT</scope>
    <scope>EPR AND MOESSBAUER SPECTROSCOPY OF THE ADENYLYLSULFATE REDUCTASE</scope>
    <scope>REDOX TITRATIONS</scope>
    <source>
        <strain evidence="6">ATCC 19364 / DSM 1382 / NCIMB 9332 / VKM B-1759</strain>
    </source>
</reference>
<proteinExistence type="evidence at protein level"/>
<evidence type="ECO:0000255" key="1">
    <source>
        <dbReference type="PROSITE-ProRule" id="PRU00711"/>
    </source>
</evidence>
<evidence type="ECO:0000269" key="2">
    <source>
    </source>
</evidence>
<evidence type="ECO:0000269" key="3">
    <source>
    </source>
</evidence>
<evidence type="ECO:0000269" key="4">
    <source>
    </source>
</evidence>
<evidence type="ECO:0000303" key="5">
    <source>
    </source>
</evidence>
<evidence type="ECO:0000303" key="6">
    <source>
    </source>
</evidence>
<evidence type="ECO:0000305" key="7"/>
<evidence type="ECO:0000312" key="8">
    <source>
        <dbReference type="EMBL" id="AGS82786.1"/>
    </source>
</evidence>
<evidence type="ECO:0000312" key="9">
    <source>
        <dbReference type="EMBL" id="AGW12371.1"/>
    </source>
</evidence>
<evidence type="ECO:0000312" key="10">
    <source>
        <dbReference type="PDB" id="3GYX"/>
    </source>
</evidence>
<evidence type="ECO:0007744" key="11">
    <source>
        <dbReference type="PDB" id="3GYX"/>
    </source>
</evidence>
<evidence type="ECO:0007829" key="12">
    <source>
        <dbReference type="PDB" id="3GYX"/>
    </source>
</evidence>
<sequence length="167" mass="18445">MPTFVDPSKCDGCKGGEKTACMYICPNDLMILDPEEMKAFNQEPEACWECYSCIKICPQGAITARPYADFAPMGGTCIPLRGSEDIMWTIKFRNGSVKRFKFPIRTTPEGSIKPFEGKPEAGDLENELLFTETALTVPQVALGQKAQIADAETSQCWFDLPCEGGNR</sequence>
<name>APRB_MEGG1</name>
<organism>
    <name type="scientific">Megalodesulfovibrio gigas (strain ATCC 19364 / DSM 1382 / NCIMB 9332 / VKM B-1759)</name>
    <name type="common">Desulfovibrio gigas</name>
    <dbReference type="NCBI Taxonomy" id="1121448"/>
    <lineage>
        <taxon>Bacteria</taxon>
        <taxon>Pseudomonadati</taxon>
        <taxon>Thermodesulfobacteriota</taxon>
        <taxon>Desulfovibrionia</taxon>
        <taxon>Desulfovibrionales</taxon>
        <taxon>Desulfovibrionaceae</taxon>
        <taxon>Megalodesulfovibrio</taxon>
    </lineage>
</organism>
<dbReference type="EMBL" id="KF113859">
    <property type="protein sequence ID" value="AGS82786.1"/>
    <property type="molecule type" value="Genomic_DNA"/>
</dbReference>
<dbReference type="EMBL" id="CP006585">
    <property type="protein sequence ID" value="AGW12371.1"/>
    <property type="molecule type" value="Genomic_DNA"/>
</dbReference>
<dbReference type="RefSeq" id="WP_021759002.1">
    <property type="nucleotide sequence ID" value="NC_022444.1"/>
</dbReference>
<dbReference type="PDB" id="3GYX">
    <property type="method" value="X-ray"/>
    <property type="resolution" value="3.20 A"/>
    <property type="chains" value="B/D/F/H/J/L=2-167"/>
</dbReference>
<dbReference type="PDBsum" id="3GYX"/>
<dbReference type="SMR" id="T2G899"/>
<dbReference type="IntAct" id="T2G899">
    <property type="interactions" value="1"/>
</dbReference>
<dbReference type="STRING" id="1121448.DGI_0458"/>
<dbReference type="KEGG" id="dgg:DGI_0458"/>
<dbReference type="PATRIC" id="fig|1121448.10.peg.455"/>
<dbReference type="HOGENOM" id="CLU_142910_0_0_7"/>
<dbReference type="OrthoDB" id="9800445at2"/>
<dbReference type="SABIO-RK" id="T2G899"/>
<dbReference type="EvolutionaryTrace" id="T2G899"/>
<dbReference type="Proteomes" id="UP000016587">
    <property type="component" value="Chromosome"/>
</dbReference>
<dbReference type="GO" id="GO:0005737">
    <property type="term" value="C:cytoplasm"/>
    <property type="evidence" value="ECO:0000314"/>
    <property type="project" value="UniProtKB"/>
</dbReference>
<dbReference type="GO" id="GO:0051539">
    <property type="term" value="F:4 iron, 4 sulfur cluster binding"/>
    <property type="evidence" value="ECO:0000314"/>
    <property type="project" value="UniProtKB"/>
</dbReference>
<dbReference type="GO" id="GO:0046872">
    <property type="term" value="F:metal ion binding"/>
    <property type="evidence" value="ECO:0007669"/>
    <property type="project" value="UniProtKB-KW"/>
</dbReference>
<dbReference type="GO" id="GO:0046982">
    <property type="term" value="F:protein heterodimerization activity"/>
    <property type="evidence" value="ECO:0000314"/>
    <property type="project" value="UniProtKB"/>
</dbReference>
<dbReference type="GO" id="GO:0019420">
    <property type="term" value="P:dissimilatory sulfate reduction"/>
    <property type="evidence" value="ECO:0000314"/>
    <property type="project" value="UniProtKB"/>
</dbReference>
<dbReference type="GO" id="GO:0051290">
    <property type="term" value="P:protein heterotetramerization"/>
    <property type="evidence" value="ECO:0000314"/>
    <property type="project" value="UniProtKB"/>
</dbReference>
<dbReference type="FunFam" id="3.30.70.20:FF:000038">
    <property type="entry name" value="Adenylylsulfate reductase subunit beta"/>
    <property type="match status" value="1"/>
</dbReference>
<dbReference type="Gene3D" id="3.30.70.20">
    <property type="match status" value="1"/>
</dbReference>
<dbReference type="Gene3D" id="6.20.260.10">
    <property type="entry name" value="Adenylylsulphate reductase, beta subunit, C-terminal domain"/>
    <property type="match status" value="1"/>
</dbReference>
<dbReference type="InterPro" id="IPR017896">
    <property type="entry name" value="4Fe4S_Fe-S-bd"/>
</dbReference>
<dbReference type="InterPro" id="IPR017900">
    <property type="entry name" value="4Fe4S_Fe_S_CS"/>
</dbReference>
<dbReference type="InterPro" id="IPR011802">
    <property type="entry name" value="AprB"/>
</dbReference>
<dbReference type="InterPro" id="IPR022738">
    <property type="entry name" value="AprB_C"/>
</dbReference>
<dbReference type="InterPro" id="IPR038465">
    <property type="entry name" value="APS_reduc_Bsu_C_sf"/>
</dbReference>
<dbReference type="InterPro" id="IPR050572">
    <property type="entry name" value="Fe-S_Ferredoxin"/>
</dbReference>
<dbReference type="NCBIfam" id="TIGR02060">
    <property type="entry name" value="aprB"/>
    <property type="match status" value="1"/>
</dbReference>
<dbReference type="PANTHER" id="PTHR43687">
    <property type="entry name" value="ADENYLYLSULFATE REDUCTASE, BETA SUBUNIT"/>
    <property type="match status" value="1"/>
</dbReference>
<dbReference type="PANTHER" id="PTHR43687:SF1">
    <property type="entry name" value="FERREDOXIN III"/>
    <property type="match status" value="1"/>
</dbReference>
<dbReference type="Pfam" id="PF12139">
    <property type="entry name" value="APS-reductase_C"/>
    <property type="match status" value="1"/>
</dbReference>
<dbReference type="Pfam" id="PF12838">
    <property type="entry name" value="Fer4_7"/>
    <property type="match status" value="1"/>
</dbReference>
<dbReference type="SUPFAM" id="SSF54862">
    <property type="entry name" value="4Fe-4S ferredoxins"/>
    <property type="match status" value="1"/>
</dbReference>
<dbReference type="PROSITE" id="PS00198">
    <property type="entry name" value="4FE4S_FER_1"/>
    <property type="match status" value="1"/>
</dbReference>
<dbReference type="PROSITE" id="PS51379">
    <property type="entry name" value="4FE4S_FER_2"/>
    <property type="match status" value="2"/>
</dbReference>
<feature type="chain" id="PRO_0000434042" description="Adenylylsulfate reductase subunit beta">
    <location>
        <begin position="1"/>
        <end position="167"/>
    </location>
</feature>
<feature type="domain" description="4Fe-4S ferredoxin-type 1" evidence="1">
    <location>
        <begin position="1"/>
        <end position="35"/>
    </location>
</feature>
<feature type="domain" description="4Fe-4S ferredoxin-type 2" evidence="1">
    <location>
        <begin position="38"/>
        <end position="67"/>
    </location>
</feature>
<feature type="binding site" evidence="2 11">
    <location>
        <position position="10"/>
    </location>
    <ligand>
        <name>[4Fe-4S] cluster</name>
        <dbReference type="ChEBI" id="CHEBI:49883"/>
        <label>1</label>
    </ligand>
</feature>
<feature type="binding site" evidence="2 11">
    <location>
        <position position="13"/>
    </location>
    <ligand>
        <name>[4Fe-4S] cluster</name>
        <dbReference type="ChEBI" id="CHEBI:49883"/>
        <label>1</label>
    </ligand>
</feature>
<feature type="binding site" evidence="2 11">
    <location>
        <position position="21"/>
    </location>
    <ligand>
        <name>[4Fe-4S] cluster</name>
        <dbReference type="ChEBI" id="CHEBI:49883"/>
        <label>1</label>
    </ligand>
</feature>
<feature type="binding site" evidence="2 11">
    <location>
        <position position="25"/>
    </location>
    <ligand>
        <name>[4Fe-4S] cluster</name>
        <dbReference type="ChEBI" id="CHEBI:49883"/>
        <label>2</label>
    </ligand>
</feature>
<feature type="binding site" evidence="2 11">
    <location>
        <position position="47"/>
    </location>
    <ligand>
        <name>[4Fe-4S] cluster</name>
        <dbReference type="ChEBI" id="CHEBI:49883"/>
        <label>2</label>
    </ligand>
</feature>
<feature type="binding site" evidence="2 11">
    <location>
        <position position="50"/>
    </location>
    <ligand>
        <name>[4Fe-4S] cluster</name>
        <dbReference type="ChEBI" id="CHEBI:49883"/>
        <label>2</label>
    </ligand>
</feature>
<feature type="binding site" evidence="2 11">
    <location>
        <position position="53"/>
    </location>
    <ligand>
        <name>[4Fe-4S] cluster</name>
        <dbReference type="ChEBI" id="CHEBI:49883"/>
        <label>2</label>
    </ligand>
</feature>
<feature type="binding site" evidence="2 11">
    <location>
        <position position="57"/>
    </location>
    <ligand>
        <name>[4Fe-4S] cluster</name>
        <dbReference type="ChEBI" id="CHEBI:49883"/>
        <label>1</label>
    </ligand>
</feature>
<feature type="site" description="Important for the electron transfer from the iron-sulfur cluster 1 to the FAD of AprA" evidence="7">
    <location>
        <position position="48"/>
    </location>
</feature>
<feature type="site" description="Important for interaction with AprA at the substrate channel entrance" evidence="2">
    <location>
        <position position="152"/>
    </location>
</feature>
<feature type="site" description="Important for interaction with AprA at the substrate channel entrance" evidence="2">
    <location>
        <position position="159"/>
    </location>
</feature>
<feature type="site" description="Important for interaction with AprA at the substrate channel entrance" evidence="2">
    <location>
        <position position="163"/>
    </location>
</feature>
<feature type="sequence conflict" description="In Ref. 3; no nucleotide entry." evidence="7" ref="3">
    <original>F</original>
    <variation>Y</variation>
    <location>
        <position position="4"/>
    </location>
</feature>
<feature type="strand" evidence="12">
    <location>
        <begin position="3"/>
        <end position="5"/>
    </location>
</feature>
<feature type="turn" evidence="12">
    <location>
        <begin position="7"/>
        <end position="9"/>
    </location>
</feature>
<feature type="strand" evidence="12">
    <location>
        <begin position="15"/>
        <end position="17"/>
    </location>
</feature>
<feature type="helix" evidence="12">
    <location>
        <begin position="20"/>
        <end position="24"/>
    </location>
</feature>
<feature type="strand" evidence="12">
    <location>
        <begin position="30"/>
        <end position="33"/>
    </location>
</feature>
<feature type="turn" evidence="12">
    <location>
        <begin position="34"/>
        <end position="37"/>
    </location>
</feature>
<feature type="strand" evidence="12">
    <location>
        <begin position="38"/>
        <end position="42"/>
    </location>
</feature>
<feature type="helix" evidence="12">
    <location>
        <begin position="44"/>
        <end position="46"/>
    </location>
</feature>
<feature type="helix" evidence="12">
    <location>
        <begin position="52"/>
        <end position="56"/>
    </location>
</feature>
<feature type="strand" evidence="12">
    <location>
        <begin position="62"/>
        <end position="64"/>
    </location>
</feature>
<feature type="turn" evidence="12">
    <location>
        <begin position="68"/>
        <end position="70"/>
    </location>
</feature>
<feature type="strand" evidence="12">
    <location>
        <begin position="76"/>
        <end position="81"/>
    </location>
</feature>
<feature type="strand" evidence="12">
    <location>
        <begin position="83"/>
        <end position="91"/>
    </location>
</feature>
<feature type="strand" evidence="12">
    <location>
        <begin position="97"/>
        <end position="103"/>
    </location>
</feature>
<feature type="strand" evidence="12">
    <location>
        <begin position="158"/>
        <end position="160"/>
    </location>
</feature>
<comment type="function">
    <text evidence="2 3">Iron-sulfur cluster subunit of the adenylylsulfate reductase which catalyzes reversibly the reduction of adenosine 5'-phosphosulfate (APS) to sulfite and AMP during dissimilatory sulfate reduction. The iron-sulfur cluster 2 is thought to accept electrons from a still unknown electron donor and transfer electrons to the iron-sulfur cluster 1 of this protein and then onto the FAD of AprA.</text>
</comment>
<comment type="cofactor">
    <cofactor evidence="2 3">
        <name>[4Fe-4S] cluster</name>
        <dbReference type="ChEBI" id="CHEBI:49883"/>
    </cofactor>
    <text evidence="2 3">Binds 2 [4Fe-4S] clusters.</text>
</comment>
<comment type="biophysicochemical properties">
    <phDependence>
        <text evidence="3">Optimum pH is 7.4 for the adenylylsulfate reductase.</text>
    </phDependence>
    <redoxPotential>
        <text evidence="3">E(0) is about 0 mV for 4Fe-4S cluster 1 and is estimated to be lower than -400 mV for a fully reduced 4Fe-4S cluster 2.</text>
    </redoxPotential>
</comment>
<comment type="subunit">
    <text evidence="2 3">Heterodimer composed of AprA and AprB (PubMed:19820092, PubMed:2158885). The heterodimers can dimerize to form heterotetramers (PubMed:2158885).</text>
</comment>
<comment type="interaction">
    <interactant intactId="EBI-6409220">
        <id>T2G899</id>
    </interactant>
    <interactant intactId="EBI-6409227">
        <id>T2G6Z9</id>
        <label>aprA</label>
    </interactant>
    <organismsDiffer>false</organismsDiffer>
    <experiments>3</experiments>
</comment>
<comment type="subcellular location">
    <subcellularLocation>
        <location evidence="4">Cytoplasm</location>
    </subcellularLocation>
</comment>
<comment type="domain">
    <text evidence="2">Consists of three sections from the N- to the C-terminus: [4Fe-4S] cluster-binding domain, beta-sheet and C-terminal tail. The beta-sheet and the C-terminal tail interact with AprA to stabilize the AprA/AprB heterodimer.</text>
</comment>
<keyword id="KW-0002">3D-structure</keyword>
<keyword id="KW-0004">4Fe-4S</keyword>
<keyword id="KW-0963">Cytoplasm</keyword>
<keyword id="KW-0249">Electron transport</keyword>
<keyword id="KW-0408">Iron</keyword>
<keyword id="KW-0411">Iron-sulfur</keyword>
<keyword id="KW-0479">Metal-binding</keyword>
<keyword id="KW-1185">Reference proteome</keyword>
<keyword id="KW-0813">Transport</keyword>